<protein>
    <recommendedName>
        <fullName evidence="1">Peptide deformylase</fullName>
        <shortName evidence="1">PDF</shortName>
        <ecNumber evidence="1">3.5.1.88</ecNumber>
    </recommendedName>
    <alternativeName>
        <fullName evidence="1">Polypeptide deformylase</fullName>
    </alternativeName>
</protein>
<evidence type="ECO:0000255" key="1">
    <source>
        <dbReference type="HAMAP-Rule" id="MF_00163"/>
    </source>
</evidence>
<evidence type="ECO:0000269" key="2">
    <source>
    </source>
</evidence>
<reference key="1">
    <citation type="journal article" date="1995" name="Science">
        <title>The minimal gene complement of Mycoplasma genitalium.</title>
        <authorList>
            <person name="Fraser C.M."/>
            <person name="Gocayne J.D."/>
            <person name="White O."/>
            <person name="Adams M.D."/>
            <person name="Clayton R.A."/>
            <person name="Fleischmann R.D."/>
            <person name="Bult C.J."/>
            <person name="Kerlavage A.R."/>
            <person name="Sutton G.G."/>
            <person name="Kelley J.M."/>
            <person name="Fritchman J.L."/>
            <person name="Weidman J.F."/>
            <person name="Small K.V."/>
            <person name="Sandusky M."/>
            <person name="Fuhrmann J.L."/>
            <person name="Nguyen D.T."/>
            <person name="Utterback T.R."/>
            <person name="Saudek D.M."/>
            <person name="Phillips C.A."/>
            <person name="Merrick J.M."/>
            <person name="Tomb J.-F."/>
            <person name="Dougherty B.A."/>
            <person name="Bott K.F."/>
            <person name="Hu P.-C."/>
            <person name="Lucier T.S."/>
            <person name="Peterson S.N."/>
            <person name="Smith H.O."/>
            <person name="Hutchison C.A. III"/>
            <person name="Venter J.C."/>
        </authorList>
    </citation>
    <scope>NUCLEOTIDE SEQUENCE [LARGE SCALE GENOMIC DNA]</scope>
    <source>
        <strain>ATCC 33530 / DSM 19775 / NCTC 10195 / G37</strain>
    </source>
</reference>
<reference key="2">
    <citation type="journal article" date="2006" name="Proc. Natl. Acad. Sci. U.S.A.">
        <title>Essential genes of a minimal bacterium.</title>
        <authorList>
            <person name="Glass J.I."/>
            <person name="Assad-Garcia N."/>
            <person name="Alperovich N."/>
            <person name="Yooseph S."/>
            <person name="Lewis M.R."/>
            <person name="Maruf M."/>
            <person name="Hutchison C.A. III"/>
            <person name="Smith H.O."/>
            <person name="Venter J.C."/>
        </authorList>
    </citation>
    <scope>SEQUENCE REVISION</scope>
    <scope>DISRUPTION PHENOTYPE</scope>
    <source>
        <strain>ATCC 33530 / DSM 19775 / NCTC 10195 / G37</strain>
    </source>
</reference>
<name>DEF_MYCGE</name>
<gene>
    <name evidence="1" type="primary">def</name>
    <name type="ordered locus">MG106</name>
</gene>
<accession>P47352</accession>
<sequence length="193" mass="22470">MTFQPTKTWLVFDDNALINKPTEAVNFPIDEQIETCIKKMIAYVDASYDGKAQEYDIIPGIGIAANQIGYWKQLFYIHLNDLNKEKKCLLINPKIIDQSENKAFLESGEGCLSVKKQHKGYVIRSEWITIKGYDWFEKKEITIKATGLFGMCLQHEFDHLQGRFFYQRINPLNPWFKKPEWKVINPTLKTSNG</sequence>
<keyword id="KW-0378">Hydrolase</keyword>
<keyword id="KW-0408">Iron</keyword>
<keyword id="KW-0479">Metal-binding</keyword>
<keyword id="KW-0648">Protein biosynthesis</keyword>
<keyword id="KW-1185">Reference proteome</keyword>
<dbReference type="EC" id="3.5.1.88" evidence="1"/>
<dbReference type="EMBL" id="L43967">
    <property type="protein sequence ID" value="AAC71324.2"/>
    <property type="molecule type" value="Genomic_DNA"/>
</dbReference>
<dbReference type="SMR" id="P47352"/>
<dbReference type="FunCoup" id="P47352">
    <property type="interactions" value="7"/>
</dbReference>
<dbReference type="STRING" id="243273.MG_106"/>
<dbReference type="KEGG" id="mge:MG_106"/>
<dbReference type="eggNOG" id="COG0242">
    <property type="taxonomic scope" value="Bacteria"/>
</dbReference>
<dbReference type="HOGENOM" id="CLU_061901_4_0_14"/>
<dbReference type="InParanoid" id="P47352"/>
<dbReference type="OrthoDB" id="9784988at2"/>
<dbReference type="Proteomes" id="UP000000807">
    <property type="component" value="Chromosome"/>
</dbReference>
<dbReference type="GO" id="GO:0046872">
    <property type="term" value="F:metal ion binding"/>
    <property type="evidence" value="ECO:0007669"/>
    <property type="project" value="UniProtKB-KW"/>
</dbReference>
<dbReference type="GO" id="GO:0042586">
    <property type="term" value="F:peptide deformylase activity"/>
    <property type="evidence" value="ECO:0000318"/>
    <property type="project" value="GO_Central"/>
</dbReference>
<dbReference type="GO" id="GO:0043686">
    <property type="term" value="P:co-translational protein modification"/>
    <property type="evidence" value="ECO:0000318"/>
    <property type="project" value="GO_Central"/>
</dbReference>
<dbReference type="GO" id="GO:0006412">
    <property type="term" value="P:translation"/>
    <property type="evidence" value="ECO:0007669"/>
    <property type="project" value="UniProtKB-UniRule"/>
</dbReference>
<dbReference type="CDD" id="cd00487">
    <property type="entry name" value="Pep_deformylase"/>
    <property type="match status" value="1"/>
</dbReference>
<dbReference type="FunFam" id="3.90.45.10:FF:000002">
    <property type="entry name" value="Peptide deformylase"/>
    <property type="match status" value="1"/>
</dbReference>
<dbReference type="Gene3D" id="3.90.45.10">
    <property type="entry name" value="Peptide deformylase"/>
    <property type="match status" value="1"/>
</dbReference>
<dbReference type="HAMAP" id="MF_00163">
    <property type="entry name" value="Pep_deformylase"/>
    <property type="match status" value="1"/>
</dbReference>
<dbReference type="InterPro" id="IPR023635">
    <property type="entry name" value="Peptide_deformylase"/>
</dbReference>
<dbReference type="InterPro" id="IPR036821">
    <property type="entry name" value="Peptide_deformylase_sf"/>
</dbReference>
<dbReference type="NCBIfam" id="TIGR00079">
    <property type="entry name" value="pept_deformyl"/>
    <property type="match status" value="1"/>
</dbReference>
<dbReference type="PANTHER" id="PTHR10458">
    <property type="entry name" value="PEPTIDE DEFORMYLASE"/>
    <property type="match status" value="1"/>
</dbReference>
<dbReference type="PANTHER" id="PTHR10458:SF22">
    <property type="entry name" value="PEPTIDE DEFORMYLASE"/>
    <property type="match status" value="1"/>
</dbReference>
<dbReference type="Pfam" id="PF01327">
    <property type="entry name" value="Pep_deformylase"/>
    <property type="match status" value="1"/>
</dbReference>
<dbReference type="PIRSF" id="PIRSF004749">
    <property type="entry name" value="Pep_def"/>
    <property type="match status" value="1"/>
</dbReference>
<dbReference type="PRINTS" id="PR01576">
    <property type="entry name" value="PDEFORMYLASE"/>
</dbReference>
<dbReference type="SUPFAM" id="SSF56420">
    <property type="entry name" value="Peptide deformylase"/>
    <property type="match status" value="1"/>
</dbReference>
<organism>
    <name type="scientific">Mycoplasma genitalium (strain ATCC 33530 / DSM 19775 / NCTC 10195 / G37)</name>
    <name type="common">Mycoplasmoides genitalium</name>
    <dbReference type="NCBI Taxonomy" id="243273"/>
    <lineage>
        <taxon>Bacteria</taxon>
        <taxon>Bacillati</taxon>
        <taxon>Mycoplasmatota</taxon>
        <taxon>Mycoplasmoidales</taxon>
        <taxon>Mycoplasmoidaceae</taxon>
        <taxon>Mycoplasmoides</taxon>
    </lineage>
</organism>
<feature type="chain" id="PRO_0000082801" description="Peptide deformylase">
    <location>
        <begin position="1"/>
        <end position="193"/>
    </location>
</feature>
<feature type="active site" evidence="1">
    <location>
        <position position="156"/>
    </location>
</feature>
<feature type="binding site" evidence="1">
    <location>
        <position position="111"/>
    </location>
    <ligand>
        <name>Fe cation</name>
        <dbReference type="ChEBI" id="CHEBI:24875"/>
    </ligand>
</feature>
<feature type="binding site" evidence="1">
    <location>
        <position position="155"/>
    </location>
    <ligand>
        <name>Fe cation</name>
        <dbReference type="ChEBI" id="CHEBI:24875"/>
    </ligand>
</feature>
<feature type="binding site" evidence="1">
    <location>
        <position position="159"/>
    </location>
    <ligand>
        <name>Fe cation</name>
        <dbReference type="ChEBI" id="CHEBI:24875"/>
    </ligand>
</feature>
<proteinExistence type="inferred from homology"/>
<comment type="function">
    <text evidence="1">Removes the formyl group from the N-terminal Met of newly synthesized proteins. Requires at least a dipeptide for an efficient rate of reaction. N-terminal L-methionine is a prerequisite for activity but the enzyme has broad specificity at other positions.</text>
</comment>
<comment type="catalytic activity">
    <reaction evidence="1">
        <text>N-terminal N-formyl-L-methionyl-[peptide] + H2O = N-terminal L-methionyl-[peptide] + formate</text>
        <dbReference type="Rhea" id="RHEA:24420"/>
        <dbReference type="Rhea" id="RHEA-COMP:10639"/>
        <dbReference type="Rhea" id="RHEA-COMP:10640"/>
        <dbReference type="ChEBI" id="CHEBI:15377"/>
        <dbReference type="ChEBI" id="CHEBI:15740"/>
        <dbReference type="ChEBI" id="CHEBI:49298"/>
        <dbReference type="ChEBI" id="CHEBI:64731"/>
        <dbReference type="EC" id="3.5.1.88"/>
    </reaction>
</comment>
<comment type="cofactor">
    <cofactor evidence="1">
        <name>Fe(2+)</name>
        <dbReference type="ChEBI" id="CHEBI:29033"/>
    </cofactor>
    <text evidence="1">Binds 1 Fe(2+) ion.</text>
</comment>
<comment type="disruption phenotype">
    <text evidence="2">Probably essential, it was not disrupted in a global transposon mutagenesis study.</text>
</comment>
<comment type="similarity">
    <text evidence="1">Belongs to the polypeptide deformylase family.</text>
</comment>